<sequence>GTLIGQDYK</sequence>
<reference evidence="3" key="1">
    <citation type="journal article" date="1999" name="J. Biol. Chem.">
        <title>Purification, characterization, and role of nucleases and serine proteases in Streptomyces differentiation. Analogies with the biochemical processes described in late steps of eukaryotic apoptosis.</title>
        <authorList>
            <person name="Nicieza R.G."/>
            <person name="Huergo J."/>
            <person name="Connolly B.A."/>
            <person name="Sanchez J."/>
        </authorList>
    </citation>
    <scope>PROTEIN SEQUENCE</scope>
    <scope>FUNCTION</scope>
    <scope>ACTIVITY REGULATION</scope>
    <scope>SUBCELLULAR LOCATION</scope>
    <scope>DEVELOPMENTAL STAGE</scope>
    <source>
        <strain>ATCC 11891 / DSM 40868 / BCRC 11580 / NCIMB 11506 / PSA 205</strain>
    </source>
</reference>
<evidence type="ECO:0000269" key="1">
    <source>
    </source>
</evidence>
<evidence type="ECO:0000303" key="2">
    <source>
    </source>
</evidence>
<evidence type="ECO:0000305" key="3"/>
<comment type="function">
    <text evidence="1">Involved in DNA degradation in the substrate mycelium. Cuts DNA nonspecifically. Possesses endonucleolytic activity.</text>
</comment>
<comment type="activity regulation">
    <text evidence="1">Stimulated by magnesium and manganese. Inhibited by zinc and aurin tricarboxylic acid.</text>
</comment>
<comment type="biophysicochemical properties">
    <phDependence>
        <text>Optimum pH is 8-8.5.</text>
    </phDependence>
</comment>
<comment type="subunit">
    <text evidence="2 3">Monomer.</text>
</comment>
<comment type="subcellular location">
    <subcellularLocation>
        <location evidence="1">Secreted</location>
    </subcellularLocation>
</comment>
<comment type="developmental stage">
    <text evidence="1">Highest expression found during aerial mycelium formation and sporulation.</text>
</comment>
<feature type="chain" id="PRO_0000057976" description="34 kDa extracellular nuclease">
    <location>
        <begin position="1"/>
        <end position="9" status="greater than"/>
    </location>
</feature>
<feature type="unsure residue" description="G or E">
    <location>
        <position position="1"/>
    </location>
</feature>
<feature type="unsure residue" description="G or A">
    <location>
        <position position="5"/>
    </location>
</feature>
<feature type="non-terminal residue" evidence="2">
    <location>
        <position position="9"/>
    </location>
</feature>
<name>NUC34_STRAT</name>
<organism>
    <name type="scientific">Streptomyces antibioticus</name>
    <dbReference type="NCBI Taxonomy" id="1890"/>
    <lineage>
        <taxon>Bacteria</taxon>
        <taxon>Bacillati</taxon>
        <taxon>Actinomycetota</taxon>
        <taxon>Actinomycetes</taxon>
        <taxon>Kitasatosporales</taxon>
        <taxon>Streptomycetaceae</taxon>
        <taxon>Streptomyces</taxon>
    </lineage>
</organism>
<proteinExistence type="evidence at protein level"/>
<dbReference type="EC" id="3.-.-.-"/>
<dbReference type="GO" id="GO:0005576">
    <property type="term" value="C:extracellular region"/>
    <property type="evidence" value="ECO:0000304"/>
    <property type="project" value="UniProtKB"/>
</dbReference>
<dbReference type="GO" id="GO:0004519">
    <property type="term" value="F:endonuclease activity"/>
    <property type="evidence" value="ECO:0000314"/>
    <property type="project" value="UniProtKB"/>
</dbReference>
<dbReference type="GO" id="GO:0000287">
    <property type="term" value="F:magnesium ion binding"/>
    <property type="evidence" value="ECO:0000304"/>
    <property type="project" value="UniProtKB"/>
</dbReference>
<dbReference type="GO" id="GO:0006308">
    <property type="term" value="P:DNA catabolic process"/>
    <property type="evidence" value="ECO:0000314"/>
    <property type="project" value="UniProtKB"/>
</dbReference>
<accession>P83222</accession>
<protein>
    <recommendedName>
        <fullName>34 kDa extracellular nuclease</fullName>
        <ecNumber>3.-.-.-</ecNumber>
    </recommendedName>
</protein>
<keyword id="KW-0903">Direct protein sequencing</keyword>
<keyword id="KW-0378">Hydrolase</keyword>
<keyword id="KW-0460">Magnesium</keyword>
<keyword id="KW-0464">Manganese</keyword>
<keyword id="KW-0540">Nuclease</keyword>
<keyword id="KW-0964">Secreted</keyword>